<reference key="1">
    <citation type="journal article" date="2007" name="PLoS Genet.">
        <title>Being pathogenic, plastic, and sexual while living with a nearly minimal bacterial genome.</title>
        <authorList>
            <person name="Sirand-Pugnet P."/>
            <person name="Lartigue C."/>
            <person name="Marenda M."/>
            <person name="Jacob D."/>
            <person name="Barre A."/>
            <person name="Barbe V."/>
            <person name="Schenowitz C."/>
            <person name="Mangenot S."/>
            <person name="Couloux A."/>
            <person name="Segurens B."/>
            <person name="de Daruvar A."/>
            <person name="Blanchard A."/>
            <person name="Citti C."/>
        </authorList>
    </citation>
    <scope>NUCLEOTIDE SEQUENCE [LARGE SCALE GENOMIC DNA]</scope>
    <source>
        <strain>NCTC 10123 / CIP 59.7 / PG2</strain>
    </source>
</reference>
<organism>
    <name type="scientific">Mycoplasmopsis agalactiae (strain NCTC 10123 / CIP 59.7 / PG2)</name>
    <name type="common">Mycoplasma agalactiae</name>
    <dbReference type="NCBI Taxonomy" id="347257"/>
    <lineage>
        <taxon>Bacteria</taxon>
        <taxon>Bacillati</taxon>
        <taxon>Mycoplasmatota</taxon>
        <taxon>Mycoplasmoidales</taxon>
        <taxon>Metamycoplasmataceae</taxon>
        <taxon>Mycoplasmopsis</taxon>
    </lineage>
</organism>
<accession>A5IYT8</accession>
<protein>
    <recommendedName>
        <fullName evidence="1">Probable endonuclease 4</fullName>
        <ecNumber evidence="1">3.1.21.2</ecNumber>
    </recommendedName>
    <alternativeName>
        <fullName evidence="1">Endodeoxyribonuclease IV</fullName>
    </alternativeName>
    <alternativeName>
        <fullName evidence="1">Endonuclease IV</fullName>
    </alternativeName>
</protein>
<evidence type="ECO:0000255" key="1">
    <source>
        <dbReference type="HAMAP-Rule" id="MF_00152"/>
    </source>
</evidence>
<gene>
    <name evidence="1" type="primary">nfo</name>
    <name type="ordered locus">MAG4990</name>
</gene>
<comment type="function">
    <text evidence="1">Endonuclease IV plays a role in DNA repair. It cleaves phosphodiester bonds at apurinic or apyrimidinic (AP) sites, generating a 3'-hydroxyl group and a 5'-terminal sugar phosphate.</text>
</comment>
<comment type="catalytic activity">
    <reaction evidence="1">
        <text>Endonucleolytic cleavage to 5'-phosphooligonucleotide end-products.</text>
        <dbReference type="EC" id="3.1.21.2"/>
    </reaction>
</comment>
<comment type="cofactor">
    <cofactor evidence="1">
        <name>Zn(2+)</name>
        <dbReference type="ChEBI" id="CHEBI:29105"/>
    </cofactor>
    <text evidence="1">Binds 3 Zn(2+) ions.</text>
</comment>
<comment type="similarity">
    <text evidence="1">Belongs to the AP endonuclease 2 family.</text>
</comment>
<name>END4_MYCAP</name>
<proteinExistence type="inferred from homology"/>
<keyword id="KW-0227">DNA damage</keyword>
<keyword id="KW-0234">DNA repair</keyword>
<keyword id="KW-0255">Endonuclease</keyword>
<keyword id="KW-0378">Hydrolase</keyword>
<keyword id="KW-0479">Metal-binding</keyword>
<keyword id="KW-0540">Nuclease</keyword>
<keyword id="KW-1185">Reference proteome</keyword>
<keyword id="KW-0862">Zinc</keyword>
<feature type="chain" id="PRO_1000096891" description="Probable endonuclease 4">
    <location>
        <begin position="1"/>
        <end position="278"/>
    </location>
</feature>
<feature type="binding site" evidence="1">
    <location>
        <position position="70"/>
    </location>
    <ligand>
        <name>Zn(2+)</name>
        <dbReference type="ChEBI" id="CHEBI:29105"/>
        <label>1</label>
    </ligand>
</feature>
<feature type="binding site" evidence="1">
    <location>
        <position position="108"/>
    </location>
    <ligand>
        <name>Zn(2+)</name>
        <dbReference type="ChEBI" id="CHEBI:29105"/>
        <label>1</label>
    </ligand>
</feature>
<feature type="binding site" evidence="1">
    <location>
        <position position="143"/>
    </location>
    <ligand>
        <name>Zn(2+)</name>
        <dbReference type="ChEBI" id="CHEBI:29105"/>
        <label>1</label>
    </ligand>
</feature>
<feature type="binding site" evidence="1">
    <location>
        <position position="143"/>
    </location>
    <ligand>
        <name>Zn(2+)</name>
        <dbReference type="ChEBI" id="CHEBI:29105"/>
        <label>2</label>
    </ligand>
</feature>
<feature type="binding site" evidence="1">
    <location>
        <position position="176"/>
    </location>
    <ligand>
        <name>Zn(2+)</name>
        <dbReference type="ChEBI" id="CHEBI:29105"/>
        <label>2</label>
    </ligand>
</feature>
<feature type="binding site" evidence="1">
    <location>
        <position position="179"/>
    </location>
    <ligand>
        <name>Zn(2+)</name>
        <dbReference type="ChEBI" id="CHEBI:29105"/>
        <label>3</label>
    </ligand>
</feature>
<feature type="binding site" evidence="1">
    <location>
        <position position="210"/>
    </location>
    <ligand>
        <name>Zn(2+)</name>
        <dbReference type="ChEBI" id="CHEBI:29105"/>
        <label>2</label>
    </ligand>
</feature>
<feature type="binding site" evidence="1">
    <location>
        <position position="223"/>
    </location>
    <ligand>
        <name>Zn(2+)</name>
        <dbReference type="ChEBI" id="CHEBI:29105"/>
        <label>3</label>
    </ligand>
</feature>
<feature type="binding site" evidence="1">
    <location>
        <position position="225"/>
    </location>
    <ligand>
        <name>Zn(2+)</name>
        <dbReference type="ChEBI" id="CHEBI:29105"/>
        <label>3</label>
    </ligand>
</feature>
<feature type="binding site" evidence="1">
    <location>
        <position position="255"/>
    </location>
    <ligand>
        <name>Zn(2+)</name>
        <dbReference type="ChEBI" id="CHEBI:29105"/>
        <label>2</label>
    </ligand>
</feature>
<sequence>MIKLGSHISFKSPNYLLGAAAESVNNKANCMMIYLGAPQTTKRVSVEKYKYNEYLEKYSKLITPDDIIVHAPYIVNPSSVSKNKFAIDFLVQEIEKMNYIGAKYLVLHPGSYTTFSVQESLDTFIASVKQILSRTKDVVICVETMAGKGAEVGINFDQINYFIHKIRNDRFAVCLDTCHIFDAGYDIRKYEEFKAEINKYNLLPHIKVIHLNDSKNSLGSHKDRHANIDKGFIGLETLAKFVHDPDFDNIPIILETPWVDNKPIYDQEIKMLLEHKAK</sequence>
<dbReference type="EC" id="3.1.21.2" evidence="1"/>
<dbReference type="EMBL" id="CU179680">
    <property type="protein sequence ID" value="CAL59197.1"/>
    <property type="molecule type" value="Genomic_DNA"/>
</dbReference>
<dbReference type="RefSeq" id="WP_011949665.1">
    <property type="nucleotide sequence ID" value="NC_009497.1"/>
</dbReference>
<dbReference type="SMR" id="A5IYT8"/>
<dbReference type="STRING" id="347257.MAG4990"/>
<dbReference type="GeneID" id="93358236"/>
<dbReference type="KEGG" id="maa:MAG4990"/>
<dbReference type="HOGENOM" id="CLU_025885_0_4_14"/>
<dbReference type="Proteomes" id="UP000007065">
    <property type="component" value="Chromosome"/>
</dbReference>
<dbReference type="GO" id="GO:0008833">
    <property type="term" value="F:deoxyribonuclease IV (phage-T4-induced) activity"/>
    <property type="evidence" value="ECO:0007669"/>
    <property type="project" value="UniProtKB-UniRule"/>
</dbReference>
<dbReference type="GO" id="GO:0003677">
    <property type="term" value="F:DNA binding"/>
    <property type="evidence" value="ECO:0007669"/>
    <property type="project" value="InterPro"/>
</dbReference>
<dbReference type="GO" id="GO:0003906">
    <property type="term" value="F:DNA-(apurinic or apyrimidinic site) endonuclease activity"/>
    <property type="evidence" value="ECO:0007669"/>
    <property type="project" value="TreeGrafter"/>
</dbReference>
<dbReference type="GO" id="GO:0008081">
    <property type="term" value="F:phosphoric diester hydrolase activity"/>
    <property type="evidence" value="ECO:0007669"/>
    <property type="project" value="TreeGrafter"/>
</dbReference>
<dbReference type="GO" id="GO:0008270">
    <property type="term" value="F:zinc ion binding"/>
    <property type="evidence" value="ECO:0007669"/>
    <property type="project" value="UniProtKB-UniRule"/>
</dbReference>
<dbReference type="GO" id="GO:0006284">
    <property type="term" value="P:base-excision repair"/>
    <property type="evidence" value="ECO:0007669"/>
    <property type="project" value="TreeGrafter"/>
</dbReference>
<dbReference type="CDD" id="cd00019">
    <property type="entry name" value="AP2Ec"/>
    <property type="match status" value="1"/>
</dbReference>
<dbReference type="FunFam" id="3.20.20.150:FF:000001">
    <property type="entry name" value="Probable endonuclease 4"/>
    <property type="match status" value="1"/>
</dbReference>
<dbReference type="Gene3D" id="3.20.20.150">
    <property type="entry name" value="Divalent-metal-dependent TIM barrel enzymes"/>
    <property type="match status" value="1"/>
</dbReference>
<dbReference type="HAMAP" id="MF_00152">
    <property type="entry name" value="Nfo"/>
    <property type="match status" value="1"/>
</dbReference>
<dbReference type="InterPro" id="IPR001719">
    <property type="entry name" value="AP_endonuc_2"/>
</dbReference>
<dbReference type="InterPro" id="IPR018246">
    <property type="entry name" value="AP_endonuc_F2_Zn_BS"/>
</dbReference>
<dbReference type="InterPro" id="IPR036237">
    <property type="entry name" value="Xyl_isomerase-like_sf"/>
</dbReference>
<dbReference type="InterPro" id="IPR013022">
    <property type="entry name" value="Xyl_isomerase-like_TIM-brl"/>
</dbReference>
<dbReference type="NCBIfam" id="TIGR00587">
    <property type="entry name" value="nfo"/>
    <property type="match status" value="1"/>
</dbReference>
<dbReference type="NCBIfam" id="NF002196">
    <property type="entry name" value="PRK01060.1-1"/>
    <property type="match status" value="1"/>
</dbReference>
<dbReference type="PANTHER" id="PTHR21445:SF0">
    <property type="entry name" value="APURINIC-APYRIMIDINIC ENDONUCLEASE"/>
    <property type="match status" value="1"/>
</dbReference>
<dbReference type="PANTHER" id="PTHR21445">
    <property type="entry name" value="ENDONUCLEASE IV ENDODEOXYRIBONUCLEASE IV"/>
    <property type="match status" value="1"/>
</dbReference>
<dbReference type="Pfam" id="PF01261">
    <property type="entry name" value="AP_endonuc_2"/>
    <property type="match status" value="1"/>
</dbReference>
<dbReference type="SMART" id="SM00518">
    <property type="entry name" value="AP2Ec"/>
    <property type="match status" value="1"/>
</dbReference>
<dbReference type="SUPFAM" id="SSF51658">
    <property type="entry name" value="Xylose isomerase-like"/>
    <property type="match status" value="1"/>
</dbReference>
<dbReference type="PROSITE" id="PS00730">
    <property type="entry name" value="AP_NUCLEASE_F2_2"/>
    <property type="match status" value="1"/>
</dbReference>
<dbReference type="PROSITE" id="PS00731">
    <property type="entry name" value="AP_NUCLEASE_F2_3"/>
    <property type="match status" value="1"/>
</dbReference>
<dbReference type="PROSITE" id="PS51432">
    <property type="entry name" value="AP_NUCLEASE_F2_4"/>
    <property type="match status" value="1"/>
</dbReference>